<comment type="function">
    <text evidence="1">Protein S19 forms a complex with S13 that binds strongly to the 16S ribosomal RNA.</text>
</comment>
<comment type="similarity">
    <text evidence="1">Belongs to the universal ribosomal protein uS19 family.</text>
</comment>
<protein>
    <recommendedName>
        <fullName evidence="1">Small ribosomal subunit protein uS19</fullName>
    </recommendedName>
    <alternativeName>
        <fullName evidence="2">30S ribosomal protein S19</fullName>
    </alternativeName>
</protein>
<sequence>MPRSLKKGPFIDDHLLKKVETQNDKGTKNVIKTWSRRSTIIPEMLGHTIAVHDGRKHVPVFVTEAMVGHKLGEFALTRTFKGHEKDDRKSRRR</sequence>
<keyword id="KW-0687">Ribonucleoprotein</keyword>
<keyword id="KW-0689">Ribosomal protein</keyword>
<keyword id="KW-0694">RNA-binding</keyword>
<keyword id="KW-0699">rRNA-binding</keyword>
<feature type="chain" id="PRO_1000081789" description="Small ribosomal subunit protein uS19">
    <location>
        <begin position="1"/>
        <end position="93"/>
    </location>
</feature>
<dbReference type="EMBL" id="CP000850">
    <property type="protein sequence ID" value="ABW00093.1"/>
    <property type="molecule type" value="Genomic_DNA"/>
</dbReference>
<dbReference type="SMR" id="A8M525"/>
<dbReference type="STRING" id="391037.Sare_4311"/>
<dbReference type="KEGG" id="saq:Sare_4311"/>
<dbReference type="eggNOG" id="COG0185">
    <property type="taxonomic scope" value="Bacteria"/>
</dbReference>
<dbReference type="HOGENOM" id="CLU_144911_0_1_11"/>
<dbReference type="OrthoDB" id="9797833at2"/>
<dbReference type="GO" id="GO:0005737">
    <property type="term" value="C:cytoplasm"/>
    <property type="evidence" value="ECO:0007669"/>
    <property type="project" value="UniProtKB-ARBA"/>
</dbReference>
<dbReference type="GO" id="GO:0015935">
    <property type="term" value="C:small ribosomal subunit"/>
    <property type="evidence" value="ECO:0007669"/>
    <property type="project" value="InterPro"/>
</dbReference>
<dbReference type="GO" id="GO:0019843">
    <property type="term" value="F:rRNA binding"/>
    <property type="evidence" value="ECO:0007669"/>
    <property type="project" value="UniProtKB-UniRule"/>
</dbReference>
<dbReference type="GO" id="GO:0003735">
    <property type="term" value="F:structural constituent of ribosome"/>
    <property type="evidence" value="ECO:0007669"/>
    <property type="project" value="InterPro"/>
</dbReference>
<dbReference type="GO" id="GO:0000028">
    <property type="term" value="P:ribosomal small subunit assembly"/>
    <property type="evidence" value="ECO:0007669"/>
    <property type="project" value="TreeGrafter"/>
</dbReference>
<dbReference type="GO" id="GO:0006412">
    <property type="term" value="P:translation"/>
    <property type="evidence" value="ECO:0007669"/>
    <property type="project" value="UniProtKB-UniRule"/>
</dbReference>
<dbReference type="FunFam" id="3.30.860.10:FF:000001">
    <property type="entry name" value="30S ribosomal protein S19"/>
    <property type="match status" value="1"/>
</dbReference>
<dbReference type="Gene3D" id="3.30.860.10">
    <property type="entry name" value="30s Ribosomal Protein S19, Chain A"/>
    <property type="match status" value="1"/>
</dbReference>
<dbReference type="HAMAP" id="MF_00531">
    <property type="entry name" value="Ribosomal_uS19"/>
    <property type="match status" value="1"/>
</dbReference>
<dbReference type="InterPro" id="IPR002222">
    <property type="entry name" value="Ribosomal_uS19"/>
</dbReference>
<dbReference type="InterPro" id="IPR005732">
    <property type="entry name" value="Ribosomal_uS19_bac-type"/>
</dbReference>
<dbReference type="InterPro" id="IPR020934">
    <property type="entry name" value="Ribosomal_uS19_CS"/>
</dbReference>
<dbReference type="InterPro" id="IPR023575">
    <property type="entry name" value="Ribosomal_uS19_SF"/>
</dbReference>
<dbReference type="NCBIfam" id="TIGR01050">
    <property type="entry name" value="rpsS_bact"/>
    <property type="match status" value="1"/>
</dbReference>
<dbReference type="PANTHER" id="PTHR11880">
    <property type="entry name" value="RIBOSOMAL PROTEIN S19P FAMILY MEMBER"/>
    <property type="match status" value="1"/>
</dbReference>
<dbReference type="PANTHER" id="PTHR11880:SF8">
    <property type="entry name" value="SMALL RIBOSOMAL SUBUNIT PROTEIN US19M"/>
    <property type="match status" value="1"/>
</dbReference>
<dbReference type="Pfam" id="PF00203">
    <property type="entry name" value="Ribosomal_S19"/>
    <property type="match status" value="1"/>
</dbReference>
<dbReference type="PIRSF" id="PIRSF002144">
    <property type="entry name" value="Ribosomal_S19"/>
    <property type="match status" value="1"/>
</dbReference>
<dbReference type="PRINTS" id="PR00975">
    <property type="entry name" value="RIBOSOMALS19"/>
</dbReference>
<dbReference type="SUPFAM" id="SSF54570">
    <property type="entry name" value="Ribosomal protein S19"/>
    <property type="match status" value="1"/>
</dbReference>
<dbReference type="PROSITE" id="PS00323">
    <property type="entry name" value="RIBOSOMAL_S19"/>
    <property type="match status" value="1"/>
</dbReference>
<organism>
    <name type="scientific">Salinispora arenicola (strain CNS-205)</name>
    <dbReference type="NCBI Taxonomy" id="391037"/>
    <lineage>
        <taxon>Bacteria</taxon>
        <taxon>Bacillati</taxon>
        <taxon>Actinomycetota</taxon>
        <taxon>Actinomycetes</taxon>
        <taxon>Micromonosporales</taxon>
        <taxon>Micromonosporaceae</taxon>
        <taxon>Salinispora</taxon>
    </lineage>
</organism>
<proteinExistence type="inferred from homology"/>
<evidence type="ECO:0000255" key="1">
    <source>
        <dbReference type="HAMAP-Rule" id="MF_00531"/>
    </source>
</evidence>
<evidence type="ECO:0000305" key="2"/>
<name>RS19_SALAI</name>
<accession>A8M525</accession>
<reference key="1">
    <citation type="submission" date="2007-10" db="EMBL/GenBank/DDBJ databases">
        <title>Complete sequence of Salinispora arenicola CNS-205.</title>
        <authorList>
            <consortium name="US DOE Joint Genome Institute"/>
            <person name="Copeland A."/>
            <person name="Lucas S."/>
            <person name="Lapidus A."/>
            <person name="Barry K."/>
            <person name="Glavina del Rio T."/>
            <person name="Dalin E."/>
            <person name="Tice H."/>
            <person name="Pitluck S."/>
            <person name="Foster B."/>
            <person name="Schmutz J."/>
            <person name="Larimer F."/>
            <person name="Land M."/>
            <person name="Hauser L."/>
            <person name="Kyrpides N."/>
            <person name="Ivanova N."/>
            <person name="Jensen P.R."/>
            <person name="Moore B.S."/>
            <person name="Penn K."/>
            <person name="Jenkins C."/>
            <person name="Udwary D."/>
            <person name="Xiang L."/>
            <person name="Gontang E."/>
            <person name="Richardson P."/>
        </authorList>
    </citation>
    <scope>NUCLEOTIDE SEQUENCE [LARGE SCALE GENOMIC DNA]</scope>
    <source>
        <strain>CNS-205</strain>
    </source>
</reference>
<gene>
    <name evidence="1" type="primary">rpsS</name>
    <name type="ordered locus">Sare_4311</name>
</gene>